<reference key="1">
    <citation type="journal article" date="2000" name="Science">
        <title>Complete genome sequence of Neisseria meningitidis serogroup B strain MC58.</title>
        <authorList>
            <person name="Tettelin H."/>
            <person name="Saunders N.J."/>
            <person name="Heidelberg J.F."/>
            <person name="Jeffries A.C."/>
            <person name="Nelson K.E."/>
            <person name="Eisen J.A."/>
            <person name="Ketchum K.A."/>
            <person name="Hood D.W."/>
            <person name="Peden J.F."/>
            <person name="Dodson R.J."/>
            <person name="Nelson W.C."/>
            <person name="Gwinn M.L."/>
            <person name="DeBoy R.T."/>
            <person name="Peterson J.D."/>
            <person name="Hickey E.K."/>
            <person name="Haft D.H."/>
            <person name="Salzberg S.L."/>
            <person name="White O."/>
            <person name="Fleischmann R.D."/>
            <person name="Dougherty B.A."/>
            <person name="Mason T.M."/>
            <person name="Ciecko A."/>
            <person name="Parksey D.S."/>
            <person name="Blair E."/>
            <person name="Cittone H."/>
            <person name="Clark E.B."/>
            <person name="Cotton M.D."/>
            <person name="Utterback T.R."/>
            <person name="Khouri H.M."/>
            <person name="Qin H."/>
            <person name="Vamathevan J.J."/>
            <person name="Gill J."/>
            <person name="Scarlato V."/>
            <person name="Masignani V."/>
            <person name="Pizza M."/>
            <person name="Grandi G."/>
            <person name="Sun L."/>
            <person name="Smith H.O."/>
            <person name="Fraser C.M."/>
            <person name="Moxon E.R."/>
            <person name="Rappuoli R."/>
            <person name="Venter J.C."/>
        </authorList>
    </citation>
    <scope>NUCLEOTIDE SEQUENCE [LARGE SCALE GENOMIC DNA]</scope>
    <source>
        <strain>ATCC BAA-335 / MC58</strain>
    </source>
</reference>
<comment type="function">
    <text evidence="1">Involved in the restart of stalled replication forks, which reloads the replicative helicase on sites other than the origin of replication; the PriA-PriB pathway is the major replication restart pathway. During primosome assembly it facilitates complex formation between PriA and DnaT on DNA; stabilizes PriA on DNA. Stimulates the DNA unwinding activity of PriA helicase.</text>
</comment>
<comment type="subunit">
    <text evidence="1">Homodimer. Interacts with PriA and DnaT. Component of the replication restart primosome. Primosome assembly occurs via a 'hand-off' mechanism. PriA binds to replication forks, subsequently PriB then DnaT bind; DnaT then displaces ssDNA to generate the helicase loading substrate.</text>
</comment>
<comment type="similarity">
    <text evidence="1">Belongs to the PriB family.</text>
</comment>
<accession>Q9JZ30</accession>
<sequence>MGFNNLVSLAALIEKVFPIRYTPAGIPVLDIILKHESWQEENGQQCLVQLEIPARILGRQAEEWQYRQGVYVHVEGFLAQKSRRSLMPMLRIQNIQEYKG</sequence>
<proteinExistence type="inferred from homology"/>
<feature type="chain" id="PRO_0000199055" description="Replication restart protein PriB">
    <location>
        <begin position="1"/>
        <end position="100"/>
    </location>
</feature>
<feature type="domain" description="SSB" evidence="1">
    <location>
        <begin position="1"/>
        <end position="99"/>
    </location>
</feature>
<keyword id="KW-0235">DNA replication</keyword>
<keyword id="KW-0238">DNA-binding</keyword>
<keyword id="KW-0639">Primosome</keyword>
<keyword id="KW-1185">Reference proteome</keyword>
<name>PRIB_NEIMB</name>
<organism>
    <name type="scientific">Neisseria meningitidis serogroup B (strain ATCC BAA-335 / MC58)</name>
    <dbReference type="NCBI Taxonomy" id="122586"/>
    <lineage>
        <taxon>Bacteria</taxon>
        <taxon>Pseudomonadati</taxon>
        <taxon>Pseudomonadota</taxon>
        <taxon>Betaproteobacteria</taxon>
        <taxon>Neisseriales</taxon>
        <taxon>Neisseriaceae</taxon>
        <taxon>Neisseria</taxon>
    </lineage>
</organism>
<gene>
    <name evidence="1" type="primary">priB</name>
    <name type="ordered locus">NMB1322</name>
</gene>
<evidence type="ECO:0000255" key="1">
    <source>
        <dbReference type="HAMAP-Rule" id="MF_00720"/>
    </source>
</evidence>
<dbReference type="EMBL" id="AE002098">
    <property type="protein sequence ID" value="AAF41697.1"/>
    <property type="molecule type" value="Genomic_DNA"/>
</dbReference>
<dbReference type="PIR" id="A81097">
    <property type="entry name" value="A81097"/>
</dbReference>
<dbReference type="RefSeq" id="NP_274341.1">
    <property type="nucleotide sequence ID" value="NC_003112.2"/>
</dbReference>
<dbReference type="RefSeq" id="WP_002213304.1">
    <property type="nucleotide sequence ID" value="NC_003112.2"/>
</dbReference>
<dbReference type="SMR" id="Q9JZ30"/>
<dbReference type="STRING" id="122586.NMB1322"/>
<dbReference type="PaxDb" id="122586-NMB1322"/>
<dbReference type="KEGG" id="nme:NMB1322"/>
<dbReference type="PATRIC" id="fig|122586.8.peg.1658"/>
<dbReference type="HOGENOM" id="CLU_166075_1_2_4"/>
<dbReference type="InParanoid" id="Q9JZ30"/>
<dbReference type="OrthoDB" id="5296916at2"/>
<dbReference type="Proteomes" id="UP000000425">
    <property type="component" value="Chromosome"/>
</dbReference>
<dbReference type="GO" id="GO:1990077">
    <property type="term" value="C:primosome complex"/>
    <property type="evidence" value="ECO:0007669"/>
    <property type="project" value="UniProtKB-KW"/>
</dbReference>
<dbReference type="GO" id="GO:0003697">
    <property type="term" value="F:single-stranded DNA binding"/>
    <property type="evidence" value="ECO:0007669"/>
    <property type="project" value="UniProtKB-UniRule"/>
</dbReference>
<dbReference type="GO" id="GO:0006269">
    <property type="term" value="P:DNA replication, synthesis of primer"/>
    <property type="evidence" value="ECO:0007669"/>
    <property type="project" value="UniProtKB-KW"/>
</dbReference>
<dbReference type="FunFam" id="2.40.50.140:FF:000357">
    <property type="entry name" value="Primosomal replication protein N"/>
    <property type="match status" value="1"/>
</dbReference>
<dbReference type="Gene3D" id="2.40.50.140">
    <property type="entry name" value="Nucleic acid-binding proteins"/>
    <property type="match status" value="1"/>
</dbReference>
<dbReference type="HAMAP" id="MF_00720">
    <property type="entry name" value="PriB"/>
    <property type="match status" value="1"/>
</dbReference>
<dbReference type="InterPro" id="IPR012340">
    <property type="entry name" value="NA-bd_OB-fold"/>
</dbReference>
<dbReference type="InterPro" id="IPR000424">
    <property type="entry name" value="Primosome_PriB/ssb"/>
</dbReference>
<dbReference type="InterPro" id="IPR023646">
    <property type="entry name" value="Prisomal_replication_PriB"/>
</dbReference>
<dbReference type="NCBIfam" id="TIGR04418">
    <property type="entry name" value="PriB_gamma"/>
    <property type="match status" value="1"/>
</dbReference>
<dbReference type="Pfam" id="PF22657">
    <property type="entry name" value="SSB_1"/>
    <property type="match status" value="1"/>
</dbReference>
<dbReference type="PIRSF" id="PIRSF003135">
    <property type="entry name" value="Primosomal_n"/>
    <property type="match status" value="1"/>
</dbReference>
<dbReference type="SUPFAM" id="SSF50249">
    <property type="entry name" value="Nucleic acid-binding proteins"/>
    <property type="match status" value="1"/>
</dbReference>
<dbReference type="PROSITE" id="PS50935">
    <property type="entry name" value="SSB"/>
    <property type="match status" value="1"/>
</dbReference>
<protein>
    <recommendedName>
        <fullName evidence="1">Replication restart protein PriB</fullName>
    </recommendedName>
</protein>